<gene>
    <name evidence="1" type="primary">rplY</name>
    <name evidence="1" type="synonym">ctc</name>
    <name type="ordered locus">PSPPH_0990</name>
</gene>
<comment type="function">
    <text evidence="1">This is one of the proteins that binds to the 5S RNA in the ribosome where it forms part of the central protuberance.</text>
</comment>
<comment type="subunit">
    <text evidence="1">Part of the 50S ribosomal subunit; part of the 5S rRNA/L5/L18/L25 subcomplex. Contacts the 5S rRNA. Binds to the 5S rRNA independently of L5 and L18.</text>
</comment>
<comment type="similarity">
    <text evidence="1">Belongs to the bacterial ribosomal protein bL25 family. CTC subfamily.</text>
</comment>
<name>RL25_PSE14</name>
<accession>Q48MW0</accession>
<keyword id="KW-0687">Ribonucleoprotein</keyword>
<keyword id="KW-0689">Ribosomal protein</keyword>
<keyword id="KW-0694">RNA-binding</keyword>
<keyword id="KW-0699">rRNA-binding</keyword>
<protein>
    <recommendedName>
        <fullName evidence="1">Large ribosomal subunit protein bL25</fullName>
    </recommendedName>
    <alternativeName>
        <fullName evidence="2">50S ribosomal protein L25</fullName>
    </alternativeName>
    <alternativeName>
        <fullName evidence="1">General stress protein CTC</fullName>
    </alternativeName>
</protein>
<sequence>MNEFTLNAEQRSDLGKGASRRLRRLASLVPAVVYGGDKAPESISMLAKEVAKLLENDAAYSHIIELNVGGQKQNVIIKALQRHPAKGHVMHADFVRVIAGQKLTAIVPIHFLNEEAPVKKGGEISHTTTELEVTCLPKDLPEFIEVDLGALEVGDNVHLSELKAPKGVEFVALAHGTDLAIANVHAPRIVKDEAEEGEEGAAE</sequence>
<feature type="chain" id="PRO_0000244228" description="Large ribosomal subunit protein bL25">
    <location>
        <begin position="1"/>
        <end position="203"/>
    </location>
</feature>
<dbReference type="EMBL" id="CP000058">
    <property type="protein sequence ID" value="AAZ34585.1"/>
    <property type="molecule type" value="Genomic_DNA"/>
</dbReference>
<dbReference type="RefSeq" id="WP_002552144.1">
    <property type="nucleotide sequence ID" value="NC_005773.3"/>
</dbReference>
<dbReference type="SMR" id="Q48MW0"/>
<dbReference type="KEGG" id="psp:PSPPH_0990"/>
<dbReference type="eggNOG" id="COG1825">
    <property type="taxonomic scope" value="Bacteria"/>
</dbReference>
<dbReference type="HOGENOM" id="CLU_075939_0_1_6"/>
<dbReference type="Proteomes" id="UP000000551">
    <property type="component" value="Chromosome"/>
</dbReference>
<dbReference type="GO" id="GO:0022625">
    <property type="term" value="C:cytosolic large ribosomal subunit"/>
    <property type="evidence" value="ECO:0007669"/>
    <property type="project" value="TreeGrafter"/>
</dbReference>
<dbReference type="GO" id="GO:0008097">
    <property type="term" value="F:5S rRNA binding"/>
    <property type="evidence" value="ECO:0007669"/>
    <property type="project" value="InterPro"/>
</dbReference>
<dbReference type="GO" id="GO:0003735">
    <property type="term" value="F:structural constituent of ribosome"/>
    <property type="evidence" value="ECO:0007669"/>
    <property type="project" value="InterPro"/>
</dbReference>
<dbReference type="GO" id="GO:0006412">
    <property type="term" value="P:translation"/>
    <property type="evidence" value="ECO:0007669"/>
    <property type="project" value="UniProtKB-UniRule"/>
</dbReference>
<dbReference type="CDD" id="cd00495">
    <property type="entry name" value="Ribosomal_L25_TL5_CTC"/>
    <property type="match status" value="1"/>
</dbReference>
<dbReference type="Gene3D" id="2.170.120.20">
    <property type="entry name" value="Ribosomal protein L25, beta domain"/>
    <property type="match status" value="1"/>
</dbReference>
<dbReference type="Gene3D" id="2.40.240.10">
    <property type="entry name" value="Ribosomal Protein L25, Chain P"/>
    <property type="match status" value="1"/>
</dbReference>
<dbReference type="HAMAP" id="MF_01334">
    <property type="entry name" value="Ribosomal_bL25_CTC"/>
    <property type="match status" value="1"/>
</dbReference>
<dbReference type="InterPro" id="IPR020056">
    <property type="entry name" value="Rbsml_bL25/Gln-tRNA_synth_N"/>
</dbReference>
<dbReference type="InterPro" id="IPR011035">
    <property type="entry name" value="Ribosomal_bL25/Gln-tRNA_synth"/>
</dbReference>
<dbReference type="InterPro" id="IPR020057">
    <property type="entry name" value="Ribosomal_bL25_b-dom"/>
</dbReference>
<dbReference type="InterPro" id="IPR037121">
    <property type="entry name" value="Ribosomal_bL25_C"/>
</dbReference>
<dbReference type="InterPro" id="IPR001021">
    <property type="entry name" value="Ribosomal_bL25_long"/>
</dbReference>
<dbReference type="InterPro" id="IPR029751">
    <property type="entry name" value="Ribosomal_L25_dom"/>
</dbReference>
<dbReference type="InterPro" id="IPR020930">
    <property type="entry name" value="Ribosomal_uL5_bac-type"/>
</dbReference>
<dbReference type="NCBIfam" id="TIGR00731">
    <property type="entry name" value="bL25_bact_ctc"/>
    <property type="match status" value="1"/>
</dbReference>
<dbReference type="NCBIfam" id="NF004128">
    <property type="entry name" value="PRK05618.1-2"/>
    <property type="match status" value="1"/>
</dbReference>
<dbReference type="NCBIfam" id="NF004130">
    <property type="entry name" value="PRK05618.1-5"/>
    <property type="match status" value="1"/>
</dbReference>
<dbReference type="NCBIfam" id="NF004612">
    <property type="entry name" value="PRK05943.1"/>
    <property type="match status" value="1"/>
</dbReference>
<dbReference type="PANTHER" id="PTHR33284">
    <property type="entry name" value="RIBOSOMAL PROTEIN L25/GLN-TRNA SYNTHETASE, ANTI-CODON-BINDING DOMAIN-CONTAINING PROTEIN"/>
    <property type="match status" value="1"/>
</dbReference>
<dbReference type="PANTHER" id="PTHR33284:SF1">
    <property type="entry name" value="RIBOSOMAL PROTEIN L25_GLN-TRNA SYNTHETASE, ANTI-CODON-BINDING DOMAIN-CONTAINING PROTEIN"/>
    <property type="match status" value="1"/>
</dbReference>
<dbReference type="Pfam" id="PF01386">
    <property type="entry name" value="Ribosomal_L25p"/>
    <property type="match status" value="1"/>
</dbReference>
<dbReference type="Pfam" id="PF14693">
    <property type="entry name" value="Ribosomal_TL5_C"/>
    <property type="match status" value="1"/>
</dbReference>
<dbReference type="SUPFAM" id="SSF50715">
    <property type="entry name" value="Ribosomal protein L25-like"/>
    <property type="match status" value="1"/>
</dbReference>
<organism>
    <name type="scientific">Pseudomonas savastanoi pv. phaseolicola (strain 1448A / Race 6)</name>
    <name type="common">Pseudomonas syringae pv. phaseolicola (strain 1448A / Race 6)</name>
    <dbReference type="NCBI Taxonomy" id="264730"/>
    <lineage>
        <taxon>Bacteria</taxon>
        <taxon>Pseudomonadati</taxon>
        <taxon>Pseudomonadota</taxon>
        <taxon>Gammaproteobacteria</taxon>
        <taxon>Pseudomonadales</taxon>
        <taxon>Pseudomonadaceae</taxon>
        <taxon>Pseudomonas</taxon>
    </lineage>
</organism>
<reference key="1">
    <citation type="journal article" date="2005" name="J. Bacteriol.">
        <title>Whole-genome sequence analysis of Pseudomonas syringae pv. phaseolicola 1448A reveals divergence among pathovars in genes involved in virulence and transposition.</title>
        <authorList>
            <person name="Joardar V."/>
            <person name="Lindeberg M."/>
            <person name="Jackson R.W."/>
            <person name="Selengut J."/>
            <person name="Dodson R."/>
            <person name="Brinkac L.M."/>
            <person name="Daugherty S.C."/>
            <person name="DeBoy R.T."/>
            <person name="Durkin A.S."/>
            <person name="Gwinn Giglio M."/>
            <person name="Madupu R."/>
            <person name="Nelson W.C."/>
            <person name="Rosovitz M.J."/>
            <person name="Sullivan S.A."/>
            <person name="Crabtree J."/>
            <person name="Creasy T."/>
            <person name="Davidsen T.M."/>
            <person name="Haft D.H."/>
            <person name="Zafar N."/>
            <person name="Zhou L."/>
            <person name="Halpin R."/>
            <person name="Holley T."/>
            <person name="Khouri H.M."/>
            <person name="Feldblyum T.V."/>
            <person name="White O."/>
            <person name="Fraser C.M."/>
            <person name="Chatterjee A.K."/>
            <person name="Cartinhour S."/>
            <person name="Schneider D."/>
            <person name="Mansfield J.W."/>
            <person name="Collmer A."/>
            <person name="Buell R."/>
        </authorList>
    </citation>
    <scope>NUCLEOTIDE SEQUENCE [LARGE SCALE GENOMIC DNA]</scope>
    <source>
        <strain>1448A / Race 6</strain>
    </source>
</reference>
<proteinExistence type="inferred from homology"/>
<evidence type="ECO:0000255" key="1">
    <source>
        <dbReference type="HAMAP-Rule" id="MF_01334"/>
    </source>
</evidence>
<evidence type="ECO:0000305" key="2"/>